<sequence>MRIGNGYDVHRLAPGQKLVLGGVEIPFECGLIGWSDADVLTHAIMDSLLGAAALGDIGLYFPPGDPKYKGISSLKLLEQVTDLLAKKGFGIINVDSVIVAEEPKLRGHIDTMRKHLAKAMGIDPGRVGIKASTSEQLGFVGRQEGMVAWAVALVDEK</sequence>
<feature type="chain" id="PRO_0000237721" description="2-C-methyl-D-erythritol 2,4-cyclodiphosphate synthase">
    <location>
        <begin position="1"/>
        <end position="157"/>
    </location>
</feature>
<feature type="binding site" evidence="1">
    <location>
        <begin position="8"/>
        <end position="10"/>
    </location>
    <ligand>
        <name>4-CDP-2-C-methyl-D-erythritol 2-phosphate</name>
        <dbReference type="ChEBI" id="CHEBI:57919"/>
    </ligand>
</feature>
<feature type="binding site" evidence="1">
    <location>
        <position position="8"/>
    </location>
    <ligand>
        <name>a divalent metal cation</name>
        <dbReference type="ChEBI" id="CHEBI:60240"/>
    </ligand>
</feature>
<feature type="binding site" evidence="1">
    <location>
        <position position="10"/>
    </location>
    <ligand>
        <name>a divalent metal cation</name>
        <dbReference type="ChEBI" id="CHEBI:60240"/>
    </ligand>
</feature>
<feature type="binding site" evidence="1">
    <location>
        <position position="42"/>
    </location>
    <ligand>
        <name>a divalent metal cation</name>
        <dbReference type="ChEBI" id="CHEBI:60240"/>
    </ligand>
</feature>
<feature type="binding site" evidence="1">
    <location>
        <begin position="56"/>
        <end position="58"/>
    </location>
    <ligand>
        <name>4-CDP-2-C-methyl-D-erythritol 2-phosphate</name>
        <dbReference type="ChEBI" id="CHEBI:57919"/>
    </ligand>
</feature>
<feature type="binding site" evidence="1">
    <location>
        <begin position="132"/>
        <end position="135"/>
    </location>
    <ligand>
        <name>4-CDP-2-C-methyl-D-erythritol 2-phosphate</name>
        <dbReference type="ChEBI" id="CHEBI:57919"/>
    </ligand>
</feature>
<feature type="binding site" evidence="1">
    <location>
        <position position="139"/>
    </location>
    <ligand>
        <name>4-CDP-2-C-methyl-D-erythritol 2-phosphate</name>
        <dbReference type="ChEBI" id="CHEBI:57919"/>
    </ligand>
</feature>
<feature type="binding site" evidence="1">
    <location>
        <position position="142"/>
    </location>
    <ligand>
        <name>4-CDP-2-C-methyl-D-erythritol 2-phosphate</name>
        <dbReference type="ChEBI" id="CHEBI:57919"/>
    </ligand>
</feature>
<feature type="site" description="Transition state stabilizer" evidence="1">
    <location>
        <position position="133"/>
    </location>
</feature>
<keyword id="KW-0414">Isoprene biosynthesis</keyword>
<keyword id="KW-0456">Lyase</keyword>
<keyword id="KW-0479">Metal-binding</keyword>
<proteinExistence type="inferred from homology"/>
<accession>Q3ZWG5</accession>
<gene>
    <name evidence="1" type="primary">ispF</name>
    <name type="ordered locus">cbdbA75</name>
</gene>
<comment type="function">
    <text evidence="1">Involved in the biosynthesis of isopentenyl diphosphate (IPP) and dimethylallyl diphosphate (DMAPP), two major building blocks of isoprenoid compounds. Catalyzes the conversion of 4-diphosphocytidyl-2-C-methyl-D-erythritol 2-phosphate (CDP-ME2P) to 2-C-methyl-D-erythritol 2,4-cyclodiphosphate (ME-CPP) with a corresponding release of cytidine 5-monophosphate (CMP).</text>
</comment>
<comment type="catalytic activity">
    <reaction evidence="1">
        <text>4-CDP-2-C-methyl-D-erythritol 2-phosphate = 2-C-methyl-D-erythritol 2,4-cyclic diphosphate + CMP</text>
        <dbReference type="Rhea" id="RHEA:23864"/>
        <dbReference type="ChEBI" id="CHEBI:57919"/>
        <dbReference type="ChEBI" id="CHEBI:58483"/>
        <dbReference type="ChEBI" id="CHEBI:60377"/>
        <dbReference type="EC" id="4.6.1.12"/>
    </reaction>
</comment>
<comment type="cofactor">
    <cofactor evidence="1">
        <name>a divalent metal cation</name>
        <dbReference type="ChEBI" id="CHEBI:60240"/>
    </cofactor>
    <text evidence="1">Binds 1 divalent metal cation per subunit.</text>
</comment>
<comment type="pathway">
    <text evidence="1">Isoprenoid biosynthesis; isopentenyl diphosphate biosynthesis via DXP pathway; isopentenyl diphosphate from 1-deoxy-D-xylulose 5-phosphate: step 4/6.</text>
</comment>
<comment type="subunit">
    <text evidence="1">Homotrimer.</text>
</comment>
<comment type="similarity">
    <text evidence="1">Belongs to the IspF family.</text>
</comment>
<organism>
    <name type="scientific">Dehalococcoides mccartyi (strain CBDB1)</name>
    <dbReference type="NCBI Taxonomy" id="255470"/>
    <lineage>
        <taxon>Bacteria</taxon>
        <taxon>Bacillati</taxon>
        <taxon>Chloroflexota</taxon>
        <taxon>Dehalococcoidia</taxon>
        <taxon>Dehalococcoidales</taxon>
        <taxon>Dehalococcoidaceae</taxon>
        <taxon>Dehalococcoides</taxon>
    </lineage>
</organism>
<evidence type="ECO:0000255" key="1">
    <source>
        <dbReference type="HAMAP-Rule" id="MF_00107"/>
    </source>
</evidence>
<dbReference type="EC" id="4.6.1.12" evidence="1"/>
<dbReference type="EMBL" id="AJ965256">
    <property type="protein sequence ID" value="CAI82335.1"/>
    <property type="molecule type" value="Genomic_DNA"/>
</dbReference>
<dbReference type="RefSeq" id="WP_011308693.1">
    <property type="nucleotide sequence ID" value="NC_007356.1"/>
</dbReference>
<dbReference type="SMR" id="Q3ZWG5"/>
<dbReference type="KEGG" id="deh:cbdbA75"/>
<dbReference type="HOGENOM" id="CLU_084630_2_0_0"/>
<dbReference type="UniPathway" id="UPA00056">
    <property type="reaction ID" value="UER00095"/>
</dbReference>
<dbReference type="Proteomes" id="UP000000433">
    <property type="component" value="Chromosome"/>
</dbReference>
<dbReference type="GO" id="GO:0008685">
    <property type="term" value="F:2-C-methyl-D-erythritol 2,4-cyclodiphosphate synthase activity"/>
    <property type="evidence" value="ECO:0007669"/>
    <property type="project" value="UniProtKB-UniRule"/>
</dbReference>
<dbReference type="GO" id="GO:0046872">
    <property type="term" value="F:metal ion binding"/>
    <property type="evidence" value="ECO:0007669"/>
    <property type="project" value="UniProtKB-KW"/>
</dbReference>
<dbReference type="GO" id="GO:0019288">
    <property type="term" value="P:isopentenyl diphosphate biosynthetic process, methylerythritol 4-phosphate pathway"/>
    <property type="evidence" value="ECO:0007669"/>
    <property type="project" value="UniProtKB-UniRule"/>
</dbReference>
<dbReference type="GO" id="GO:0016114">
    <property type="term" value="P:terpenoid biosynthetic process"/>
    <property type="evidence" value="ECO:0007669"/>
    <property type="project" value="InterPro"/>
</dbReference>
<dbReference type="CDD" id="cd00554">
    <property type="entry name" value="MECDP_synthase"/>
    <property type="match status" value="1"/>
</dbReference>
<dbReference type="Gene3D" id="3.30.1330.50">
    <property type="entry name" value="2-C-methyl-D-erythritol 2,4-cyclodiphosphate synthase"/>
    <property type="match status" value="1"/>
</dbReference>
<dbReference type="HAMAP" id="MF_00107">
    <property type="entry name" value="IspF"/>
    <property type="match status" value="1"/>
</dbReference>
<dbReference type="InterPro" id="IPR003526">
    <property type="entry name" value="MECDP_synthase"/>
</dbReference>
<dbReference type="InterPro" id="IPR020555">
    <property type="entry name" value="MECDP_synthase_CS"/>
</dbReference>
<dbReference type="InterPro" id="IPR036571">
    <property type="entry name" value="MECDP_synthase_sf"/>
</dbReference>
<dbReference type="NCBIfam" id="TIGR00151">
    <property type="entry name" value="ispF"/>
    <property type="match status" value="1"/>
</dbReference>
<dbReference type="PANTHER" id="PTHR43181">
    <property type="entry name" value="2-C-METHYL-D-ERYTHRITOL 2,4-CYCLODIPHOSPHATE SYNTHASE, CHLOROPLASTIC"/>
    <property type="match status" value="1"/>
</dbReference>
<dbReference type="PANTHER" id="PTHR43181:SF1">
    <property type="entry name" value="2-C-METHYL-D-ERYTHRITOL 2,4-CYCLODIPHOSPHATE SYNTHASE, CHLOROPLASTIC"/>
    <property type="match status" value="1"/>
</dbReference>
<dbReference type="Pfam" id="PF02542">
    <property type="entry name" value="YgbB"/>
    <property type="match status" value="1"/>
</dbReference>
<dbReference type="SUPFAM" id="SSF69765">
    <property type="entry name" value="IpsF-like"/>
    <property type="match status" value="1"/>
</dbReference>
<dbReference type="PROSITE" id="PS01350">
    <property type="entry name" value="ISPF"/>
    <property type="match status" value="1"/>
</dbReference>
<name>ISPF_DEHMC</name>
<protein>
    <recommendedName>
        <fullName evidence="1">2-C-methyl-D-erythritol 2,4-cyclodiphosphate synthase</fullName>
        <shortName evidence="1">MECDP-synthase</shortName>
        <shortName evidence="1">MECPP-synthase</shortName>
        <shortName evidence="1">MECPS</shortName>
        <ecNumber evidence="1">4.6.1.12</ecNumber>
    </recommendedName>
</protein>
<reference key="1">
    <citation type="journal article" date="2005" name="Nat. Biotechnol.">
        <title>Genome sequence of the chlorinated compound-respiring bacterium Dehalococcoides species strain CBDB1.</title>
        <authorList>
            <person name="Kube M."/>
            <person name="Beck A."/>
            <person name="Zinder S.H."/>
            <person name="Kuhl H."/>
            <person name="Reinhardt R."/>
            <person name="Adrian L."/>
        </authorList>
    </citation>
    <scope>NUCLEOTIDE SEQUENCE [LARGE SCALE GENOMIC DNA]</scope>
    <source>
        <strain>CBDB1</strain>
    </source>
</reference>